<reference key="1">
    <citation type="journal article" date="2004" name="Mol. Plant Microbe Interact.">
        <title>The genome sequence of the Gram-positive sugarcane pathogen Leifsonia xyli subsp. xyli.</title>
        <authorList>
            <person name="Monteiro-Vitorello C.B."/>
            <person name="Camargo L.E.A."/>
            <person name="Van Sluys M.A."/>
            <person name="Kitajima J.P."/>
            <person name="Truffi D."/>
            <person name="do Amaral A.M."/>
            <person name="Harakava R."/>
            <person name="de Oliveira J.C.F."/>
            <person name="Wood D."/>
            <person name="de Oliveira M.C."/>
            <person name="Miyaki C.Y."/>
            <person name="Takita M.A."/>
            <person name="da Silva A.C.R."/>
            <person name="Furlan L.R."/>
            <person name="Carraro D.M."/>
            <person name="Camarotte G."/>
            <person name="Almeida N.F. Jr."/>
            <person name="Carrer H."/>
            <person name="Coutinho L.L."/>
            <person name="El-Dorry H.A."/>
            <person name="Ferro M.I.T."/>
            <person name="Gagliardi P.R."/>
            <person name="Giglioti E."/>
            <person name="Goldman M.H.S."/>
            <person name="Goldman G.H."/>
            <person name="Kimura E.T."/>
            <person name="Ferro E.S."/>
            <person name="Kuramae E.E."/>
            <person name="Lemos E.G.M."/>
            <person name="Lemos M.V.F."/>
            <person name="Mauro S.M.Z."/>
            <person name="Machado M.A."/>
            <person name="Marino C.L."/>
            <person name="Menck C.F."/>
            <person name="Nunes L.R."/>
            <person name="Oliveira R.C."/>
            <person name="Pereira G.G."/>
            <person name="Siqueira W."/>
            <person name="de Souza A.A."/>
            <person name="Tsai S.M."/>
            <person name="Zanca A.S."/>
            <person name="Simpson A.J.G."/>
            <person name="Brumbley S.M."/>
            <person name="Setubal J.C."/>
        </authorList>
    </citation>
    <scope>NUCLEOTIDE SEQUENCE [LARGE SCALE GENOMIC DNA]</scope>
    <source>
        <strain>CTCB07</strain>
    </source>
</reference>
<keyword id="KW-0963">Cytoplasm</keyword>
<keyword id="KW-0342">GTP-binding</keyword>
<keyword id="KW-0396">Initiation factor</keyword>
<keyword id="KW-0547">Nucleotide-binding</keyword>
<keyword id="KW-0648">Protein biosynthesis</keyword>
<keyword id="KW-1185">Reference proteome</keyword>
<accession>Q6AG49</accession>
<protein>
    <recommendedName>
        <fullName evidence="2">Translation initiation factor IF-2</fullName>
    </recommendedName>
</protein>
<sequence>MGPDRRIVAAKPRVHEVASELGVDSKIALAKLKEMGEFVKGPSSSIEPPVARKLRAALEAEGHLPGAGGDKTAAQASPAPRPPRPATADGSGAPKPQAPMSVAERQAAAEKAASEKAAAEKVAASEAADAKPAAGAPADTAKPSSPPRPSGVSAPRPGNNPFASNQGMGQRPSAPRPGNNPFSSSQGMGQRPSPSNIPRPAPPRPGSPRIGAPRPGGGQRQGGGGRPGFQQRPGSAGGGAGGGLQRPGGAGAGGFSGPRTGGGGGRGRGPGGGTAGAFGRGGGKSKARKSKRAKRQEFEMREAPSLGGVTVPRGDGGTAIRLRRGASISDFADKIDANPASLVTVLFHLGEMATATESLDEATFQILGEELGYKVQVVSPEDEDKELLEGFDIDLDAELEGESDEDLEIRPPVVTVMGHVDHGKTRLLDAIRSANVVEGEAGGITQHIGAYQVWTEHEGIERAITFIDTPGHEAFTAMRARGAQVTDIAILVVAADDGIMPQTIEALNHAQAANVPIVVAVNKVDKPEANPAKVRQQLTEFSLVAEEYGGDVMFVDVSARNNIGIQELLDAVLLTADAGLDLRANPNKDARGVAIEAKLDKGRGAVATVLIQSGTLRVGDAIVAGTAYGRVRAMADENGDPVLEAAPSRPVQVQGLSSVPRAGDTFIVTEEDRTARQIAEKREAAERNAQLAKARKRISLEDFTRALEEGKVEALNLIIKGDVSGAVEALEESLMKIEVDDSVSLRILHRGVGAITESDIDLATIDNAIVIGFNVRPDVKARERAAREGVDVRFYSVIYNAIDDIESSLKGMLKPEFEEVQSGVADIREVFRSSKFGNIAGVIVRSGTITRNAKARVIRDGVVIADNLAIESLRRFKDDVTEVRTDFECGIGLGKYNDIQVGDEIETIEMREKPRV</sequence>
<evidence type="ECO:0000250" key="1"/>
<evidence type="ECO:0000255" key="2">
    <source>
        <dbReference type="HAMAP-Rule" id="MF_00100"/>
    </source>
</evidence>
<evidence type="ECO:0000256" key="3">
    <source>
        <dbReference type="SAM" id="MobiDB-lite"/>
    </source>
</evidence>
<proteinExistence type="inferred from homology"/>
<organism>
    <name type="scientific">Leifsonia xyli subsp. xyli (strain CTCB07)</name>
    <dbReference type="NCBI Taxonomy" id="281090"/>
    <lineage>
        <taxon>Bacteria</taxon>
        <taxon>Bacillati</taxon>
        <taxon>Actinomycetota</taxon>
        <taxon>Actinomycetes</taxon>
        <taxon>Micrococcales</taxon>
        <taxon>Microbacteriaceae</taxon>
        <taxon>Leifsonia</taxon>
    </lineage>
</organism>
<comment type="function">
    <text evidence="2">One of the essential components for the initiation of protein synthesis. Protects formylmethionyl-tRNA from spontaneous hydrolysis and promotes its binding to the 30S ribosomal subunits. Also involved in the hydrolysis of GTP during the formation of the 70S ribosomal complex.</text>
</comment>
<comment type="subcellular location">
    <subcellularLocation>
        <location evidence="2">Cytoplasm</location>
    </subcellularLocation>
</comment>
<comment type="similarity">
    <text evidence="2">Belongs to the TRAFAC class translation factor GTPase superfamily. Classic translation factor GTPase family. IF-2 subfamily.</text>
</comment>
<name>IF2_LEIXX</name>
<dbReference type="EMBL" id="AE016822">
    <property type="protein sequence ID" value="AAT88646.1"/>
    <property type="molecule type" value="Genomic_DNA"/>
</dbReference>
<dbReference type="SMR" id="Q6AG49"/>
<dbReference type="STRING" id="281090.Lxx07150"/>
<dbReference type="KEGG" id="lxx:Lxx07150"/>
<dbReference type="eggNOG" id="COG0532">
    <property type="taxonomic scope" value="Bacteria"/>
</dbReference>
<dbReference type="HOGENOM" id="CLU_006301_9_1_11"/>
<dbReference type="Proteomes" id="UP000001306">
    <property type="component" value="Chromosome"/>
</dbReference>
<dbReference type="GO" id="GO:0005829">
    <property type="term" value="C:cytosol"/>
    <property type="evidence" value="ECO:0007669"/>
    <property type="project" value="TreeGrafter"/>
</dbReference>
<dbReference type="GO" id="GO:0005525">
    <property type="term" value="F:GTP binding"/>
    <property type="evidence" value="ECO:0007669"/>
    <property type="project" value="UniProtKB-KW"/>
</dbReference>
<dbReference type="GO" id="GO:0003924">
    <property type="term" value="F:GTPase activity"/>
    <property type="evidence" value="ECO:0007669"/>
    <property type="project" value="UniProtKB-UniRule"/>
</dbReference>
<dbReference type="GO" id="GO:0003743">
    <property type="term" value="F:translation initiation factor activity"/>
    <property type="evidence" value="ECO:0007669"/>
    <property type="project" value="UniProtKB-UniRule"/>
</dbReference>
<dbReference type="CDD" id="cd01887">
    <property type="entry name" value="IF2_eIF5B"/>
    <property type="match status" value="1"/>
</dbReference>
<dbReference type="CDD" id="cd03702">
    <property type="entry name" value="IF2_mtIF2_II"/>
    <property type="match status" value="1"/>
</dbReference>
<dbReference type="CDD" id="cd03692">
    <property type="entry name" value="mtIF2_IVc"/>
    <property type="match status" value="1"/>
</dbReference>
<dbReference type="FunFam" id="2.40.30.10:FF:000007">
    <property type="entry name" value="Translation initiation factor IF-2"/>
    <property type="match status" value="1"/>
</dbReference>
<dbReference type="FunFam" id="2.40.30.10:FF:000008">
    <property type="entry name" value="Translation initiation factor IF-2"/>
    <property type="match status" value="1"/>
</dbReference>
<dbReference type="FunFam" id="3.40.50.10050:FF:000001">
    <property type="entry name" value="Translation initiation factor IF-2"/>
    <property type="match status" value="1"/>
</dbReference>
<dbReference type="FunFam" id="3.40.50.300:FF:000019">
    <property type="entry name" value="Translation initiation factor IF-2"/>
    <property type="match status" value="1"/>
</dbReference>
<dbReference type="Gene3D" id="1.10.10.2480">
    <property type="match status" value="1"/>
</dbReference>
<dbReference type="Gene3D" id="3.40.50.300">
    <property type="entry name" value="P-loop containing nucleotide triphosphate hydrolases"/>
    <property type="match status" value="1"/>
</dbReference>
<dbReference type="Gene3D" id="2.40.30.10">
    <property type="entry name" value="Translation factors"/>
    <property type="match status" value="2"/>
</dbReference>
<dbReference type="Gene3D" id="3.40.50.10050">
    <property type="entry name" value="Translation initiation factor IF- 2, domain 3"/>
    <property type="match status" value="1"/>
</dbReference>
<dbReference type="HAMAP" id="MF_00100_B">
    <property type="entry name" value="IF_2_B"/>
    <property type="match status" value="1"/>
</dbReference>
<dbReference type="InterPro" id="IPR053905">
    <property type="entry name" value="EF-G-like_DII"/>
</dbReference>
<dbReference type="InterPro" id="IPR044145">
    <property type="entry name" value="IF2_II"/>
</dbReference>
<dbReference type="InterPro" id="IPR006847">
    <property type="entry name" value="IF2_N"/>
</dbReference>
<dbReference type="InterPro" id="IPR027417">
    <property type="entry name" value="P-loop_NTPase"/>
</dbReference>
<dbReference type="InterPro" id="IPR005225">
    <property type="entry name" value="Small_GTP-bd"/>
</dbReference>
<dbReference type="InterPro" id="IPR000795">
    <property type="entry name" value="T_Tr_GTP-bd_dom"/>
</dbReference>
<dbReference type="InterPro" id="IPR000178">
    <property type="entry name" value="TF_IF2_bacterial-like"/>
</dbReference>
<dbReference type="InterPro" id="IPR015760">
    <property type="entry name" value="TIF_IF2"/>
</dbReference>
<dbReference type="InterPro" id="IPR023115">
    <property type="entry name" value="TIF_IF2_dom3"/>
</dbReference>
<dbReference type="InterPro" id="IPR036925">
    <property type="entry name" value="TIF_IF2_dom3_sf"/>
</dbReference>
<dbReference type="InterPro" id="IPR009000">
    <property type="entry name" value="Transl_B-barrel_sf"/>
</dbReference>
<dbReference type="NCBIfam" id="TIGR00487">
    <property type="entry name" value="IF-2"/>
    <property type="match status" value="1"/>
</dbReference>
<dbReference type="NCBIfam" id="TIGR00231">
    <property type="entry name" value="small_GTP"/>
    <property type="match status" value="1"/>
</dbReference>
<dbReference type="PANTHER" id="PTHR43381:SF5">
    <property type="entry name" value="TR-TYPE G DOMAIN-CONTAINING PROTEIN"/>
    <property type="match status" value="1"/>
</dbReference>
<dbReference type="PANTHER" id="PTHR43381">
    <property type="entry name" value="TRANSLATION INITIATION FACTOR IF-2-RELATED"/>
    <property type="match status" value="1"/>
</dbReference>
<dbReference type="Pfam" id="PF22042">
    <property type="entry name" value="EF-G_D2"/>
    <property type="match status" value="1"/>
</dbReference>
<dbReference type="Pfam" id="PF00009">
    <property type="entry name" value="GTP_EFTU"/>
    <property type="match status" value="1"/>
</dbReference>
<dbReference type="Pfam" id="PF11987">
    <property type="entry name" value="IF-2"/>
    <property type="match status" value="1"/>
</dbReference>
<dbReference type="Pfam" id="PF04760">
    <property type="entry name" value="IF2_N"/>
    <property type="match status" value="2"/>
</dbReference>
<dbReference type="PRINTS" id="PR00315">
    <property type="entry name" value="ELONGATNFCT"/>
</dbReference>
<dbReference type="SUPFAM" id="SSF52156">
    <property type="entry name" value="Initiation factor IF2/eIF5b, domain 3"/>
    <property type="match status" value="1"/>
</dbReference>
<dbReference type="SUPFAM" id="SSF52540">
    <property type="entry name" value="P-loop containing nucleoside triphosphate hydrolases"/>
    <property type="match status" value="1"/>
</dbReference>
<dbReference type="SUPFAM" id="SSF50447">
    <property type="entry name" value="Translation proteins"/>
    <property type="match status" value="2"/>
</dbReference>
<dbReference type="PROSITE" id="PS51722">
    <property type="entry name" value="G_TR_2"/>
    <property type="match status" value="1"/>
</dbReference>
<dbReference type="PROSITE" id="PS01176">
    <property type="entry name" value="IF2"/>
    <property type="match status" value="1"/>
</dbReference>
<feature type="chain" id="PRO_0000137214" description="Translation initiation factor IF-2">
    <location>
        <begin position="1"/>
        <end position="916"/>
    </location>
</feature>
<feature type="domain" description="tr-type G">
    <location>
        <begin position="409"/>
        <end position="583"/>
    </location>
</feature>
<feature type="region of interest" description="Disordered" evidence="3">
    <location>
        <begin position="58"/>
        <end position="317"/>
    </location>
</feature>
<feature type="region of interest" description="G1" evidence="1">
    <location>
        <begin position="418"/>
        <end position="425"/>
    </location>
</feature>
<feature type="region of interest" description="G2" evidence="1">
    <location>
        <begin position="443"/>
        <end position="447"/>
    </location>
</feature>
<feature type="region of interest" description="G3" evidence="1">
    <location>
        <begin position="468"/>
        <end position="471"/>
    </location>
</feature>
<feature type="region of interest" description="G4" evidence="1">
    <location>
        <begin position="522"/>
        <end position="525"/>
    </location>
</feature>
<feature type="region of interest" description="G5" evidence="1">
    <location>
        <begin position="558"/>
        <end position="560"/>
    </location>
</feature>
<feature type="compositionally biased region" description="Low complexity" evidence="3">
    <location>
        <begin position="120"/>
        <end position="142"/>
    </location>
</feature>
<feature type="compositionally biased region" description="Pro residues" evidence="3">
    <location>
        <begin position="195"/>
        <end position="206"/>
    </location>
</feature>
<feature type="compositionally biased region" description="Gly residues" evidence="3">
    <location>
        <begin position="214"/>
        <end position="227"/>
    </location>
</feature>
<feature type="compositionally biased region" description="Gly residues" evidence="3">
    <location>
        <begin position="235"/>
        <end position="282"/>
    </location>
</feature>
<feature type="compositionally biased region" description="Basic residues" evidence="3">
    <location>
        <begin position="283"/>
        <end position="294"/>
    </location>
</feature>
<feature type="binding site" evidence="2">
    <location>
        <begin position="418"/>
        <end position="425"/>
    </location>
    <ligand>
        <name>GTP</name>
        <dbReference type="ChEBI" id="CHEBI:37565"/>
    </ligand>
</feature>
<feature type="binding site" evidence="2">
    <location>
        <begin position="468"/>
        <end position="472"/>
    </location>
    <ligand>
        <name>GTP</name>
        <dbReference type="ChEBI" id="CHEBI:37565"/>
    </ligand>
</feature>
<feature type="binding site" evidence="2">
    <location>
        <begin position="522"/>
        <end position="525"/>
    </location>
    <ligand>
        <name>GTP</name>
        <dbReference type="ChEBI" id="CHEBI:37565"/>
    </ligand>
</feature>
<gene>
    <name evidence="2" type="primary">infB</name>
    <name type="ordered locus">Lxx07150</name>
</gene>